<sequence>METKKISYFLLPSLMIVALIFQPMCSAFTIAEPYIHPCMKGFCSFKSECANKCIFMGHHKGGDCIGGLDGIYCCCLA</sequence>
<accession>P82762</accession>
<feature type="signal peptide" evidence="2">
    <location>
        <begin position="1"/>
        <end position="27"/>
    </location>
</feature>
<feature type="chain" id="PRO_0000017286" description="Defensin-like protein 91">
    <location>
        <begin position="28"/>
        <end position="77"/>
    </location>
</feature>
<feature type="disulfide bond" evidence="1">
    <location>
        <begin position="38"/>
        <end position="75"/>
    </location>
</feature>
<feature type="disulfide bond" evidence="1">
    <location>
        <begin position="43"/>
        <end position="64"/>
    </location>
</feature>
<feature type="disulfide bond" evidence="1">
    <location>
        <begin position="49"/>
        <end position="73"/>
    </location>
</feature>
<feature type="disulfide bond" evidence="1">
    <location>
        <begin position="53"/>
        <end position="74"/>
    </location>
</feature>
<name>DEF91_ARATH</name>
<dbReference type="EMBL" id="AL138653">
    <property type="status" value="NOT_ANNOTATED_CDS"/>
    <property type="molecule type" value="Genomic_DNA"/>
</dbReference>
<dbReference type="EMBL" id="CP002686">
    <property type="protein sequence ID" value="AEE77735.1"/>
    <property type="molecule type" value="Genomic_DNA"/>
</dbReference>
<dbReference type="EMBL" id="BX825690">
    <property type="status" value="NOT_ANNOTATED_CDS"/>
    <property type="molecule type" value="mRNA"/>
</dbReference>
<dbReference type="RefSeq" id="NP_001030800.2">
    <property type="nucleotide sequence ID" value="NM_001035723.3"/>
</dbReference>
<dbReference type="SMR" id="P82762"/>
<dbReference type="PaxDb" id="3702-AT3G42473.1"/>
<dbReference type="EnsemblPlants" id="AT3G42473.1">
    <property type="protein sequence ID" value="AT3G42473.1"/>
    <property type="gene ID" value="AT3G42473"/>
</dbReference>
<dbReference type="GeneID" id="3769457"/>
<dbReference type="Gramene" id="AT3G42473.1">
    <property type="protein sequence ID" value="AT3G42473.1"/>
    <property type="gene ID" value="AT3G42473"/>
</dbReference>
<dbReference type="KEGG" id="ath:AT3G42473"/>
<dbReference type="Araport" id="AT3G42473"/>
<dbReference type="TAIR" id="AT3G42473">
    <property type="gene designation" value="LCR47"/>
</dbReference>
<dbReference type="HOGENOM" id="CLU_190964_1_0_1"/>
<dbReference type="InParanoid" id="P82762"/>
<dbReference type="PhylomeDB" id="P82762"/>
<dbReference type="PRO" id="PR:P82762"/>
<dbReference type="Proteomes" id="UP000006548">
    <property type="component" value="Chromosome 3"/>
</dbReference>
<dbReference type="ExpressionAtlas" id="P82762">
    <property type="expression patterns" value="baseline and differential"/>
</dbReference>
<dbReference type="GO" id="GO:0005576">
    <property type="term" value="C:extracellular region"/>
    <property type="evidence" value="ECO:0007669"/>
    <property type="project" value="UniProtKB-SubCell"/>
</dbReference>
<dbReference type="GO" id="GO:0050832">
    <property type="term" value="P:defense response to fungus"/>
    <property type="evidence" value="ECO:0007669"/>
    <property type="project" value="UniProtKB-KW"/>
</dbReference>
<dbReference type="GO" id="GO:0031640">
    <property type="term" value="P:killing of cells of another organism"/>
    <property type="evidence" value="ECO:0007669"/>
    <property type="project" value="UniProtKB-KW"/>
</dbReference>
<comment type="subcellular location">
    <subcellularLocation>
        <location evidence="1">Secreted</location>
    </subcellularLocation>
</comment>
<comment type="similarity">
    <text evidence="3">Belongs to the DEFL family.</text>
</comment>
<comment type="sequence caution" evidence="3">
    <conflict type="miscellaneous discrepancy">
        <sequence resource="EMBL" id="BX825690"/>
    </conflict>
    <text>Sequencing errors.</text>
</comment>
<proteinExistence type="inferred from homology"/>
<gene>
    <name type="primary">LCR47</name>
    <name type="ordered locus">At3g42473</name>
    <name type="ORF">T32A11</name>
</gene>
<protein>
    <recommendedName>
        <fullName>Defensin-like protein 91</fullName>
    </recommendedName>
    <alternativeName>
        <fullName>Low-molecular-weight cysteine-rich protein 47</fullName>
        <shortName>Protein LCR47</shortName>
    </alternativeName>
</protein>
<reference evidence="3" key="1">
    <citation type="journal article" date="2000" name="Nature">
        <title>Sequence and analysis of chromosome 3 of the plant Arabidopsis thaliana.</title>
        <authorList>
            <person name="Salanoubat M."/>
            <person name="Lemcke K."/>
            <person name="Rieger M."/>
            <person name="Ansorge W."/>
            <person name="Unseld M."/>
            <person name="Fartmann B."/>
            <person name="Valle G."/>
            <person name="Bloecker H."/>
            <person name="Perez-Alonso M."/>
            <person name="Obermaier B."/>
            <person name="Delseny M."/>
            <person name="Boutry M."/>
            <person name="Grivell L.A."/>
            <person name="Mache R."/>
            <person name="Puigdomenech P."/>
            <person name="De Simone V."/>
            <person name="Choisne N."/>
            <person name="Artiguenave F."/>
            <person name="Robert C."/>
            <person name="Brottier P."/>
            <person name="Wincker P."/>
            <person name="Cattolico L."/>
            <person name="Weissenbach J."/>
            <person name="Saurin W."/>
            <person name="Quetier F."/>
            <person name="Schaefer M."/>
            <person name="Mueller-Auer S."/>
            <person name="Gabel C."/>
            <person name="Fuchs M."/>
            <person name="Benes V."/>
            <person name="Wurmbach E."/>
            <person name="Drzonek H."/>
            <person name="Erfle H."/>
            <person name="Jordan N."/>
            <person name="Bangert S."/>
            <person name="Wiedelmann R."/>
            <person name="Kranz H."/>
            <person name="Voss H."/>
            <person name="Holland R."/>
            <person name="Brandt P."/>
            <person name="Nyakatura G."/>
            <person name="Vezzi A."/>
            <person name="D'Angelo M."/>
            <person name="Pallavicini A."/>
            <person name="Toppo S."/>
            <person name="Simionati B."/>
            <person name="Conrad A."/>
            <person name="Hornischer K."/>
            <person name="Kauer G."/>
            <person name="Loehnert T.-H."/>
            <person name="Nordsiek G."/>
            <person name="Reichelt J."/>
            <person name="Scharfe M."/>
            <person name="Schoen O."/>
            <person name="Bargues M."/>
            <person name="Terol J."/>
            <person name="Climent J."/>
            <person name="Navarro P."/>
            <person name="Collado C."/>
            <person name="Perez-Perez A."/>
            <person name="Ottenwaelder B."/>
            <person name="Duchemin D."/>
            <person name="Cooke R."/>
            <person name="Laudie M."/>
            <person name="Berger-Llauro C."/>
            <person name="Purnelle B."/>
            <person name="Masuy D."/>
            <person name="de Haan M."/>
            <person name="Maarse A.C."/>
            <person name="Alcaraz J.-P."/>
            <person name="Cottet A."/>
            <person name="Casacuberta E."/>
            <person name="Monfort A."/>
            <person name="Argiriou A."/>
            <person name="Flores M."/>
            <person name="Liguori R."/>
            <person name="Vitale D."/>
            <person name="Mannhaupt G."/>
            <person name="Haase D."/>
            <person name="Schoof H."/>
            <person name="Rudd S."/>
            <person name="Zaccaria P."/>
            <person name="Mewes H.-W."/>
            <person name="Mayer K.F.X."/>
            <person name="Kaul S."/>
            <person name="Town C.D."/>
            <person name="Koo H.L."/>
            <person name="Tallon L.J."/>
            <person name="Jenkins J."/>
            <person name="Rooney T."/>
            <person name="Rizzo M."/>
            <person name="Walts A."/>
            <person name="Utterback T."/>
            <person name="Fujii C.Y."/>
            <person name="Shea T.P."/>
            <person name="Creasy T.H."/>
            <person name="Haas B."/>
            <person name="Maiti R."/>
            <person name="Wu D."/>
            <person name="Peterson J."/>
            <person name="Van Aken S."/>
            <person name="Pai G."/>
            <person name="Militscher J."/>
            <person name="Sellers P."/>
            <person name="Gill J.E."/>
            <person name="Feldblyum T.V."/>
            <person name="Preuss D."/>
            <person name="Lin X."/>
            <person name="Nierman W.C."/>
            <person name="Salzberg S.L."/>
            <person name="White O."/>
            <person name="Venter J.C."/>
            <person name="Fraser C.M."/>
            <person name="Kaneko T."/>
            <person name="Nakamura Y."/>
            <person name="Sato S."/>
            <person name="Kato T."/>
            <person name="Asamizu E."/>
            <person name="Sasamoto S."/>
            <person name="Kimura T."/>
            <person name="Idesawa K."/>
            <person name="Kawashima K."/>
            <person name="Kishida Y."/>
            <person name="Kiyokawa C."/>
            <person name="Kohara M."/>
            <person name="Matsumoto M."/>
            <person name="Matsuno A."/>
            <person name="Muraki A."/>
            <person name="Nakayama S."/>
            <person name="Nakazaki N."/>
            <person name="Shinpo S."/>
            <person name="Takeuchi C."/>
            <person name="Wada T."/>
            <person name="Watanabe A."/>
            <person name="Yamada M."/>
            <person name="Yasuda M."/>
            <person name="Tabata S."/>
        </authorList>
    </citation>
    <scope>NUCLEOTIDE SEQUENCE [LARGE SCALE GENOMIC DNA]</scope>
    <source>
        <strain>cv. Columbia</strain>
    </source>
</reference>
<reference key="2">
    <citation type="journal article" date="2017" name="Plant J.">
        <title>Araport11: a complete reannotation of the Arabidopsis thaliana reference genome.</title>
        <authorList>
            <person name="Cheng C.Y."/>
            <person name="Krishnakumar V."/>
            <person name="Chan A.P."/>
            <person name="Thibaud-Nissen F."/>
            <person name="Schobel S."/>
            <person name="Town C.D."/>
        </authorList>
    </citation>
    <scope>GENOME REANNOTATION</scope>
    <source>
        <strain>cv. Columbia</strain>
    </source>
</reference>
<reference key="3">
    <citation type="journal article" date="2004" name="Genome Res.">
        <title>Whole genome sequence comparisons and 'full-length' cDNA sequences: a combined approach to evaluate and improve Arabidopsis genome annotation.</title>
        <authorList>
            <person name="Castelli V."/>
            <person name="Aury J.-M."/>
            <person name="Jaillon O."/>
            <person name="Wincker P."/>
            <person name="Clepet C."/>
            <person name="Menard M."/>
            <person name="Cruaud C."/>
            <person name="Quetier F."/>
            <person name="Scarpelli C."/>
            <person name="Schaechter V."/>
            <person name="Temple G."/>
            <person name="Caboche M."/>
            <person name="Weissenbach J."/>
            <person name="Salanoubat M."/>
        </authorList>
    </citation>
    <scope>NUCLEOTIDE SEQUENCE [LARGE SCALE MRNA]</scope>
    <source>
        <strain>cv. Columbia</strain>
    </source>
</reference>
<reference evidence="3" key="4">
    <citation type="journal article" date="2001" name="Plant Mol. Biol.">
        <title>Two large Arabidopsis thaliana gene families are homologous to the Brassica gene superfamily that encodes pollen coat proteins and the male component of the self-incompatibility response.</title>
        <authorList>
            <person name="Vanoosthuyse V."/>
            <person name="Miege C."/>
            <person name="Dumas C."/>
            <person name="Cock J.M."/>
        </authorList>
    </citation>
    <scope>IDENTIFICATION</scope>
</reference>
<reference key="5">
    <citation type="journal article" date="2005" name="Plant Physiol.">
        <title>Genome organization of more than 300 defensin-like genes in Arabidopsis.</title>
        <authorList>
            <person name="Silverstein K.A.T."/>
            <person name="Graham M.A."/>
            <person name="Paape T.D."/>
            <person name="VandenBosch K.A."/>
        </authorList>
    </citation>
    <scope>GENE FAMILY</scope>
</reference>
<evidence type="ECO:0000250" key="1"/>
<evidence type="ECO:0000255" key="2"/>
<evidence type="ECO:0000305" key="3"/>
<keyword id="KW-0929">Antimicrobial</keyword>
<keyword id="KW-1015">Disulfide bond</keyword>
<keyword id="KW-0295">Fungicide</keyword>
<keyword id="KW-0611">Plant defense</keyword>
<keyword id="KW-1185">Reference proteome</keyword>
<keyword id="KW-0964">Secreted</keyword>
<keyword id="KW-0732">Signal</keyword>
<organism evidence="3">
    <name type="scientific">Arabidopsis thaliana</name>
    <name type="common">Mouse-ear cress</name>
    <dbReference type="NCBI Taxonomy" id="3702"/>
    <lineage>
        <taxon>Eukaryota</taxon>
        <taxon>Viridiplantae</taxon>
        <taxon>Streptophyta</taxon>
        <taxon>Embryophyta</taxon>
        <taxon>Tracheophyta</taxon>
        <taxon>Spermatophyta</taxon>
        <taxon>Magnoliopsida</taxon>
        <taxon>eudicotyledons</taxon>
        <taxon>Gunneridae</taxon>
        <taxon>Pentapetalae</taxon>
        <taxon>rosids</taxon>
        <taxon>malvids</taxon>
        <taxon>Brassicales</taxon>
        <taxon>Brassicaceae</taxon>
        <taxon>Camelineae</taxon>
        <taxon>Arabidopsis</taxon>
    </lineage>
</organism>